<organism>
    <name type="scientific">Listeria monocytogenes serotype 4b (strain CLIP80459)</name>
    <dbReference type="NCBI Taxonomy" id="568819"/>
    <lineage>
        <taxon>Bacteria</taxon>
        <taxon>Bacillati</taxon>
        <taxon>Bacillota</taxon>
        <taxon>Bacilli</taxon>
        <taxon>Bacillales</taxon>
        <taxon>Listeriaceae</taxon>
        <taxon>Listeria</taxon>
    </lineage>
</organism>
<accession>C1L1T2</accession>
<proteinExistence type="inferred from homology"/>
<comment type="function">
    <text evidence="1">Catalyzes the transfer of an acetyl group from acetyl-CoA to tetrahydrodipicolinate.</text>
</comment>
<comment type="catalytic activity">
    <reaction evidence="1">
        <text>(S)-2,3,4,5-tetrahydrodipicolinate + acetyl-CoA + H2O = L-2-acetamido-6-oxoheptanedioate + CoA</text>
        <dbReference type="Rhea" id="RHEA:13085"/>
        <dbReference type="ChEBI" id="CHEBI:15377"/>
        <dbReference type="ChEBI" id="CHEBI:16845"/>
        <dbReference type="ChEBI" id="CHEBI:57287"/>
        <dbReference type="ChEBI" id="CHEBI:57288"/>
        <dbReference type="ChEBI" id="CHEBI:58117"/>
        <dbReference type="EC" id="2.3.1.89"/>
    </reaction>
</comment>
<comment type="pathway">
    <text evidence="1">Amino-acid biosynthesis; L-lysine biosynthesis via DAP pathway; LL-2,6-diaminopimelate from (S)-tetrahydrodipicolinate (acetylase route): step 1/3.</text>
</comment>
<comment type="similarity">
    <text evidence="1">Belongs to the transferase hexapeptide repeat family. DapH subfamily.</text>
</comment>
<name>DAPH_LISMC</name>
<protein>
    <recommendedName>
        <fullName evidence="1">2,3,4,5-tetrahydropyridine-2,6-dicarboxylate N-acetyltransferase</fullName>
        <ecNumber evidence="1">2.3.1.89</ecNumber>
    </recommendedName>
    <alternativeName>
        <fullName evidence="1">Tetrahydrodipicolinate N-acetyltransferase</fullName>
        <shortName evidence="1">THP acetyltransferase</shortName>
        <shortName evidence="1">Tetrahydropicolinate acetylase</shortName>
    </alternativeName>
</protein>
<reference key="1">
    <citation type="journal article" date="2012" name="BMC Genomics">
        <title>Comparative genomics and transcriptomics of lineages I, II, and III strains of Listeria monocytogenes.</title>
        <authorList>
            <person name="Hain T."/>
            <person name="Ghai R."/>
            <person name="Billion A."/>
            <person name="Kuenne C.T."/>
            <person name="Steinweg C."/>
            <person name="Izar B."/>
            <person name="Mohamed W."/>
            <person name="Mraheil M."/>
            <person name="Domann E."/>
            <person name="Schaffrath S."/>
            <person name="Karst U."/>
            <person name="Goesmann A."/>
            <person name="Oehm S."/>
            <person name="Puhler A."/>
            <person name="Merkl R."/>
            <person name="Vorwerk S."/>
            <person name="Glaser P."/>
            <person name="Garrido P."/>
            <person name="Rusniok C."/>
            <person name="Buchrieser C."/>
            <person name="Goebel W."/>
            <person name="Chakraborty T."/>
        </authorList>
    </citation>
    <scope>NUCLEOTIDE SEQUENCE [LARGE SCALE GENOMIC DNA]</scope>
    <source>
        <strain>CLIP80459</strain>
    </source>
</reference>
<feature type="chain" id="PRO_1000215931" description="2,3,4,5-tetrahydropyridine-2,6-dicarboxylate N-acetyltransferase">
    <location>
        <begin position="1"/>
        <end position="236"/>
    </location>
</feature>
<dbReference type="EC" id="2.3.1.89" evidence="1"/>
<dbReference type="EMBL" id="FM242711">
    <property type="protein sequence ID" value="CAS04797.1"/>
    <property type="molecule type" value="Genomic_DNA"/>
</dbReference>
<dbReference type="SMR" id="C1L1T2"/>
<dbReference type="KEGG" id="lmc:Lm4b_01031"/>
<dbReference type="HOGENOM" id="CLU_103751_0_0_9"/>
<dbReference type="UniPathway" id="UPA00034">
    <property type="reaction ID" value="UER00022"/>
</dbReference>
<dbReference type="GO" id="GO:0047200">
    <property type="term" value="F:tetrahydrodipicolinate N-acetyltransferase activity"/>
    <property type="evidence" value="ECO:0007669"/>
    <property type="project" value="UniProtKB-EC"/>
</dbReference>
<dbReference type="GO" id="GO:0019877">
    <property type="term" value="P:diaminopimelate biosynthetic process"/>
    <property type="evidence" value="ECO:0007669"/>
    <property type="project" value="UniProtKB-UniRule"/>
</dbReference>
<dbReference type="GO" id="GO:0009089">
    <property type="term" value="P:lysine biosynthetic process via diaminopimelate"/>
    <property type="evidence" value="ECO:0007669"/>
    <property type="project" value="UniProtKB-UniRule"/>
</dbReference>
<dbReference type="Gene3D" id="2.160.10.10">
    <property type="entry name" value="Hexapeptide repeat proteins"/>
    <property type="match status" value="1"/>
</dbReference>
<dbReference type="Gene3D" id="3.30.70.250">
    <property type="entry name" value="Malonyl-CoA ACP transacylase, ACP-binding"/>
    <property type="match status" value="1"/>
</dbReference>
<dbReference type="HAMAP" id="MF_01691">
    <property type="entry name" value="DapH"/>
    <property type="match status" value="1"/>
</dbReference>
<dbReference type="InterPro" id="IPR019873">
    <property type="entry name" value="DapH"/>
</dbReference>
<dbReference type="InterPro" id="IPR013710">
    <property type="entry name" value="DapH_N"/>
</dbReference>
<dbReference type="InterPro" id="IPR001451">
    <property type="entry name" value="Hexapep"/>
</dbReference>
<dbReference type="InterPro" id="IPR018357">
    <property type="entry name" value="Hexapep_transf_CS"/>
</dbReference>
<dbReference type="InterPro" id="IPR050179">
    <property type="entry name" value="Trans_hexapeptide_repeat"/>
</dbReference>
<dbReference type="InterPro" id="IPR011004">
    <property type="entry name" value="Trimer_LpxA-like_sf"/>
</dbReference>
<dbReference type="NCBIfam" id="TIGR03532">
    <property type="entry name" value="DapD_Ac"/>
    <property type="match status" value="1"/>
</dbReference>
<dbReference type="PANTHER" id="PTHR43300:SF10">
    <property type="entry name" value="2,3,4,5-TETRAHYDROPYRIDINE-2,6-DICARBOXYLATE N-ACETYLTRANSFERASE"/>
    <property type="match status" value="1"/>
</dbReference>
<dbReference type="PANTHER" id="PTHR43300">
    <property type="entry name" value="ACETYLTRANSFERASE"/>
    <property type="match status" value="1"/>
</dbReference>
<dbReference type="Pfam" id="PF08503">
    <property type="entry name" value="DapH_N"/>
    <property type="match status" value="1"/>
</dbReference>
<dbReference type="Pfam" id="PF00132">
    <property type="entry name" value="Hexapep"/>
    <property type="match status" value="1"/>
</dbReference>
<dbReference type="Pfam" id="PF14602">
    <property type="entry name" value="Hexapep_2"/>
    <property type="match status" value="1"/>
</dbReference>
<dbReference type="SUPFAM" id="SSF51161">
    <property type="entry name" value="Trimeric LpxA-like enzymes"/>
    <property type="match status" value="1"/>
</dbReference>
<dbReference type="PROSITE" id="PS00101">
    <property type="entry name" value="HEXAPEP_TRANSFERASES"/>
    <property type="match status" value="1"/>
</dbReference>
<gene>
    <name evidence="1" type="primary">dapH</name>
    <name type="ordered locus">Lm4b_01031</name>
</gene>
<sequence>MEQMDAHQIISFIQNSKKATPVKVYLKGDLEKIDFPSDVKTFITGNAGTIFGEWAVVEPFLEANKANIEDYVIENDRRNSAIPLLDMKNINARIEPGAVIRDQVTIGDNAVIMMGASINIGSVIGDGTMIDMNVVLGGRATVGKNCHIGAGSVLAGVVEPPSAQPVVVEDNVVVGANVVVLEGVRIGEGAVVAAGAIVTKDVAPGTVVAGIPARELKKLDAKTASKTEIMQELRQL</sequence>
<evidence type="ECO:0000255" key="1">
    <source>
        <dbReference type="HAMAP-Rule" id="MF_01691"/>
    </source>
</evidence>
<keyword id="KW-0012">Acyltransferase</keyword>
<keyword id="KW-0028">Amino-acid biosynthesis</keyword>
<keyword id="KW-0220">Diaminopimelate biosynthesis</keyword>
<keyword id="KW-0457">Lysine biosynthesis</keyword>
<keyword id="KW-0677">Repeat</keyword>
<keyword id="KW-0808">Transferase</keyword>